<dbReference type="EMBL" id="D49400">
    <property type="protein sequence ID" value="BAA08392.1"/>
    <property type="molecule type" value="mRNA"/>
</dbReference>
<dbReference type="EMBL" id="CR456896">
    <property type="protein sequence ID" value="CAG33177.1"/>
    <property type="molecule type" value="mRNA"/>
</dbReference>
<dbReference type="EMBL" id="AC025594">
    <property type="status" value="NOT_ANNOTATED_CDS"/>
    <property type="molecule type" value="Genomic_DNA"/>
</dbReference>
<dbReference type="EMBL" id="BC104230">
    <property type="protein sequence ID" value="AAI04231.1"/>
    <property type="molecule type" value="mRNA"/>
</dbReference>
<dbReference type="EMBL" id="BC104231">
    <property type="protein sequence ID" value="AAI04232.1"/>
    <property type="molecule type" value="mRNA"/>
</dbReference>
<dbReference type="EMBL" id="BC107854">
    <property type="protein sequence ID" value="AAI07855.1"/>
    <property type="molecule type" value="mRNA"/>
</dbReference>
<dbReference type="EMBL" id="BU956696">
    <property type="status" value="NOT_ANNOTATED_CDS"/>
    <property type="molecule type" value="mRNA"/>
</dbReference>
<dbReference type="CCDS" id="CCDS56511.1">
    <molecule id="Q16864-2"/>
</dbReference>
<dbReference type="CCDS" id="CCDS5807.1">
    <molecule id="Q16864-1"/>
</dbReference>
<dbReference type="PIR" id="JC4193">
    <property type="entry name" value="JC4193"/>
</dbReference>
<dbReference type="RefSeq" id="NP_001185838.1">
    <molecule id="Q16864-2"/>
    <property type="nucleotide sequence ID" value="NM_001198909.2"/>
</dbReference>
<dbReference type="RefSeq" id="NP_004222.2">
    <molecule id="Q16864-1"/>
    <property type="nucleotide sequence ID" value="NM_004231.3"/>
</dbReference>
<dbReference type="PDB" id="6WLZ">
    <property type="method" value="EM"/>
    <property type="resolution" value="2.90 A"/>
    <property type="chains" value="N=1-119"/>
</dbReference>
<dbReference type="PDB" id="6WM2">
    <property type="method" value="EM"/>
    <property type="resolution" value="3.10 A"/>
    <property type="chains" value="N=1-119"/>
</dbReference>
<dbReference type="PDB" id="6WM3">
    <property type="method" value="EM"/>
    <property type="resolution" value="3.40 A"/>
    <property type="chains" value="N=1-119"/>
</dbReference>
<dbReference type="PDB" id="6WM4">
    <property type="method" value="EM"/>
    <property type="resolution" value="3.60 A"/>
    <property type="chains" value="N=1-119"/>
</dbReference>
<dbReference type="PDB" id="7U4T">
    <property type="method" value="EM"/>
    <property type="resolution" value="3.60 A"/>
    <property type="chains" value="N=1-119"/>
</dbReference>
<dbReference type="PDB" id="7UNF">
    <property type="method" value="EM"/>
    <property type="resolution" value="4.08 A"/>
    <property type="chains" value="F=1-119"/>
</dbReference>
<dbReference type="PDBsum" id="6WLZ"/>
<dbReference type="PDBsum" id="6WM2"/>
<dbReference type="PDBsum" id="6WM3"/>
<dbReference type="PDBsum" id="6WM4"/>
<dbReference type="PDBsum" id="7U4T"/>
<dbReference type="PDBsum" id="7UNF"/>
<dbReference type="EMDB" id="EMD-21845"/>
<dbReference type="EMDB" id="EMD-21847"/>
<dbReference type="EMDB" id="EMD-21848"/>
<dbReference type="EMDB" id="EMD-21849"/>
<dbReference type="EMDB" id="EMD-26334"/>
<dbReference type="EMDB" id="EMD-26623"/>
<dbReference type="SMR" id="Q16864"/>
<dbReference type="BioGRID" id="114710">
    <property type="interactions" value="137"/>
</dbReference>
<dbReference type="ComplexPortal" id="CPX-2470">
    <property type="entry name" value="Vacuolar proton translocating ATPase complex, ATP6V0A1 variant"/>
</dbReference>
<dbReference type="ComplexPortal" id="CPX-6904">
    <property type="entry name" value="Vacuolar proton translocating ATPase complex, ATP6V0A2 variant"/>
</dbReference>
<dbReference type="ComplexPortal" id="CPX-6905">
    <property type="entry name" value="Vacuolar proton translocating ATPase complex, ATP6V0A3 variant"/>
</dbReference>
<dbReference type="ComplexPortal" id="CPX-6912">
    <property type="entry name" value="Vacuolar proton translocating ATPase complex, ATP6V0A4 variant"/>
</dbReference>
<dbReference type="FunCoup" id="Q16864">
    <property type="interactions" value="1415"/>
</dbReference>
<dbReference type="IntAct" id="Q16864">
    <property type="interactions" value="58"/>
</dbReference>
<dbReference type="MINT" id="Q16864"/>
<dbReference type="STRING" id="9606.ENSP00000417378"/>
<dbReference type="DrugBank" id="DB01133">
    <property type="generic name" value="Tiludronic acid"/>
</dbReference>
<dbReference type="TCDB" id="3.A.2.2.4">
    <property type="family name" value="the h+- or na+-translocating f-type, v-type and a-type atpase (f-atpase) superfamily"/>
</dbReference>
<dbReference type="iPTMnet" id="Q16864"/>
<dbReference type="MetOSite" id="Q16864"/>
<dbReference type="PhosphoSitePlus" id="Q16864"/>
<dbReference type="BioMuta" id="ATP6V1F"/>
<dbReference type="DMDM" id="126302612"/>
<dbReference type="jPOST" id="Q16864"/>
<dbReference type="MassIVE" id="Q16864"/>
<dbReference type="PeptideAtlas" id="Q16864"/>
<dbReference type="ProteomicsDB" id="61111">
    <molecule id="Q16864-1"/>
</dbReference>
<dbReference type="ProteomicsDB" id="8219"/>
<dbReference type="Pumba" id="Q16864"/>
<dbReference type="TopDownProteomics" id="Q16864-1">
    <molecule id="Q16864-1"/>
</dbReference>
<dbReference type="TopDownProteomics" id="Q16864-2">
    <molecule id="Q16864-2"/>
</dbReference>
<dbReference type="Antibodypedia" id="4025">
    <property type="antibodies" value="207 antibodies from 25 providers"/>
</dbReference>
<dbReference type="DNASU" id="9296"/>
<dbReference type="Ensembl" id="ENST00000249289.5">
    <molecule id="Q16864-1"/>
    <property type="protein sequence ID" value="ENSP00000249289.4"/>
    <property type="gene ID" value="ENSG00000128524.5"/>
</dbReference>
<dbReference type="Ensembl" id="ENST00000492758.1">
    <molecule id="Q16864-2"/>
    <property type="protein sequence ID" value="ENSP00000417378.1"/>
    <property type="gene ID" value="ENSG00000128524.5"/>
</dbReference>
<dbReference type="GeneID" id="9296"/>
<dbReference type="KEGG" id="hsa:9296"/>
<dbReference type="MANE-Select" id="ENST00000249289.5">
    <property type="protein sequence ID" value="ENSP00000249289.4"/>
    <property type="RefSeq nucleotide sequence ID" value="NM_004231.4"/>
    <property type="RefSeq protein sequence ID" value="NP_004222.2"/>
</dbReference>
<dbReference type="UCSC" id="uc003voc.3">
    <molecule id="Q16864-1"/>
    <property type="organism name" value="human"/>
</dbReference>
<dbReference type="AGR" id="HGNC:16832"/>
<dbReference type="CTD" id="9296"/>
<dbReference type="DisGeNET" id="9296"/>
<dbReference type="GeneCards" id="ATP6V1F"/>
<dbReference type="HGNC" id="HGNC:16832">
    <property type="gene designation" value="ATP6V1F"/>
</dbReference>
<dbReference type="HPA" id="ENSG00000128524">
    <property type="expression patterns" value="Low tissue specificity"/>
</dbReference>
<dbReference type="MIM" id="607160">
    <property type="type" value="gene"/>
</dbReference>
<dbReference type="neXtProt" id="NX_Q16864"/>
<dbReference type="OpenTargets" id="ENSG00000128524"/>
<dbReference type="PharmGKB" id="PA38421"/>
<dbReference type="VEuPathDB" id="HostDB:ENSG00000128524"/>
<dbReference type="GeneTree" id="ENSGT00390000013208"/>
<dbReference type="HOGENOM" id="CLU_135754_0_0_1"/>
<dbReference type="InParanoid" id="Q16864"/>
<dbReference type="OMA" id="IIICQHI"/>
<dbReference type="OrthoDB" id="10261947at2759"/>
<dbReference type="PAN-GO" id="Q16864">
    <property type="GO annotations" value="1 GO annotation based on evolutionary models"/>
</dbReference>
<dbReference type="PhylomeDB" id="Q16864"/>
<dbReference type="TreeFam" id="TF300080"/>
<dbReference type="BioCyc" id="MetaCyc:HS05192-MONOMER"/>
<dbReference type="PathwayCommons" id="Q16864"/>
<dbReference type="Reactome" id="R-HSA-1222556">
    <property type="pathway name" value="ROS and RNS production in phagocytes"/>
</dbReference>
<dbReference type="Reactome" id="R-HSA-77387">
    <property type="pathway name" value="Insulin receptor recycling"/>
</dbReference>
<dbReference type="Reactome" id="R-HSA-917977">
    <property type="pathway name" value="Transferrin endocytosis and recycling"/>
</dbReference>
<dbReference type="Reactome" id="R-HSA-9639288">
    <property type="pathway name" value="Amino acids regulate mTORC1"/>
</dbReference>
<dbReference type="Reactome" id="R-HSA-983712">
    <property type="pathway name" value="Ion channel transport"/>
</dbReference>
<dbReference type="SignaLink" id="Q16864"/>
<dbReference type="SIGNOR" id="Q16864"/>
<dbReference type="BioGRID-ORCS" id="9296">
    <property type="hits" value="664 hits in 1160 CRISPR screens"/>
</dbReference>
<dbReference type="ChiTaRS" id="ATP6V1F">
    <property type="organism name" value="human"/>
</dbReference>
<dbReference type="GeneWiki" id="ATP6V1F"/>
<dbReference type="GenomeRNAi" id="9296"/>
<dbReference type="Pharos" id="Q16864">
    <property type="development level" value="Tbio"/>
</dbReference>
<dbReference type="PRO" id="PR:Q16864"/>
<dbReference type="Proteomes" id="UP000005640">
    <property type="component" value="Chromosome 7"/>
</dbReference>
<dbReference type="RNAct" id="Q16864">
    <property type="molecule type" value="protein"/>
</dbReference>
<dbReference type="Bgee" id="ENSG00000128524">
    <property type="expression patterns" value="Expressed in prefrontal cortex and 212 other cell types or tissues"/>
</dbReference>
<dbReference type="ExpressionAtlas" id="Q16864">
    <property type="expression patterns" value="baseline and differential"/>
</dbReference>
<dbReference type="GO" id="GO:0030665">
    <property type="term" value="C:clathrin-coated vesicle membrane"/>
    <property type="evidence" value="ECO:0007669"/>
    <property type="project" value="UniProtKB-SubCell"/>
</dbReference>
<dbReference type="GO" id="GO:0005829">
    <property type="term" value="C:cytosol"/>
    <property type="evidence" value="ECO:0000304"/>
    <property type="project" value="Reactome"/>
</dbReference>
<dbReference type="GO" id="GO:0010008">
    <property type="term" value="C:endosome membrane"/>
    <property type="evidence" value="ECO:0000303"/>
    <property type="project" value="ComplexPortal"/>
</dbReference>
<dbReference type="GO" id="GO:0070062">
    <property type="term" value="C:extracellular exosome"/>
    <property type="evidence" value="ECO:0007005"/>
    <property type="project" value="UniProtKB"/>
</dbReference>
<dbReference type="GO" id="GO:0000139">
    <property type="term" value="C:Golgi membrane"/>
    <property type="evidence" value="ECO:0000303"/>
    <property type="project" value="ComplexPortal"/>
</dbReference>
<dbReference type="GO" id="GO:0005765">
    <property type="term" value="C:lysosomal membrane"/>
    <property type="evidence" value="ECO:0000303"/>
    <property type="project" value="ComplexPortal"/>
</dbReference>
<dbReference type="GO" id="GO:0016020">
    <property type="term" value="C:membrane"/>
    <property type="evidence" value="ECO:0000314"/>
    <property type="project" value="UniProtKB"/>
</dbReference>
<dbReference type="GO" id="GO:0005886">
    <property type="term" value="C:plasma membrane"/>
    <property type="evidence" value="ECO:0000303"/>
    <property type="project" value="ComplexPortal"/>
</dbReference>
<dbReference type="GO" id="GO:0033176">
    <property type="term" value="C:proton-transporting V-type ATPase complex"/>
    <property type="evidence" value="ECO:0000303"/>
    <property type="project" value="ComplexPortal"/>
</dbReference>
<dbReference type="GO" id="GO:0030672">
    <property type="term" value="C:synaptic vesicle membrane"/>
    <property type="evidence" value="ECO:0007669"/>
    <property type="project" value="UniProtKB-SubCell"/>
</dbReference>
<dbReference type="GO" id="GO:0016471">
    <property type="term" value="C:vacuolar proton-transporting V-type ATPase complex"/>
    <property type="evidence" value="ECO:0000314"/>
    <property type="project" value="UniProtKB"/>
</dbReference>
<dbReference type="GO" id="GO:0000221">
    <property type="term" value="C:vacuolar proton-transporting V-type ATPase, V1 domain"/>
    <property type="evidence" value="ECO:0000250"/>
    <property type="project" value="UniProtKB"/>
</dbReference>
<dbReference type="GO" id="GO:0042625">
    <property type="term" value="F:ATPase-coupled ion transmembrane transporter activity"/>
    <property type="evidence" value="ECO:0000303"/>
    <property type="project" value="UniProtKB"/>
</dbReference>
<dbReference type="GO" id="GO:0015078">
    <property type="term" value="F:proton transmembrane transporter activity"/>
    <property type="evidence" value="ECO:0000303"/>
    <property type="project" value="UniProtKB"/>
</dbReference>
<dbReference type="GO" id="GO:0046961">
    <property type="term" value="F:proton-transporting ATPase activity, rotational mechanism"/>
    <property type="evidence" value="ECO:0007669"/>
    <property type="project" value="InterPro"/>
</dbReference>
<dbReference type="GO" id="GO:0048388">
    <property type="term" value="P:endosomal lumen acidification"/>
    <property type="evidence" value="ECO:0000303"/>
    <property type="project" value="ComplexPortal"/>
</dbReference>
<dbReference type="GO" id="GO:0061795">
    <property type="term" value="P:Golgi lumen acidification"/>
    <property type="evidence" value="ECO:0000303"/>
    <property type="project" value="ComplexPortal"/>
</dbReference>
<dbReference type="GO" id="GO:0051452">
    <property type="term" value="P:intracellular pH reduction"/>
    <property type="evidence" value="ECO:0000303"/>
    <property type="project" value="ComplexPortal"/>
</dbReference>
<dbReference type="GO" id="GO:0007042">
    <property type="term" value="P:lysosomal lumen acidification"/>
    <property type="evidence" value="ECO:0000303"/>
    <property type="project" value="ComplexPortal"/>
</dbReference>
<dbReference type="GO" id="GO:1902600">
    <property type="term" value="P:proton transmembrane transport"/>
    <property type="evidence" value="ECO:0000303"/>
    <property type="project" value="UniProtKB"/>
</dbReference>
<dbReference type="GO" id="GO:0097401">
    <property type="term" value="P:synaptic vesicle lumen acidification"/>
    <property type="evidence" value="ECO:0007669"/>
    <property type="project" value="Ensembl"/>
</dbReference>
<dbReference type="GO" id="GO:0007035">
    <property type="term" value="P:vacuolar acidification"/>
    <property type="evidence" value="ECO:0000303"/>
    <property type="project" value="ComplexPortal"/>
</dbReference>
<dbReference type="FunFam" id="3.40.50.10580:FF:000001">
    <property type="entry name" value="V-type proton ATPase subunit F"/>
    <property type="match status" value="1"/>
</dbReference>
<dbReference type="Gene3D" id="3.40.50.10580">
    <property type="entry name" value="ATPase, V1 complex, subunit F"/>
    <property type="match status" value="1"/>
</dbReference>
<dbReference type="InterPro" id="IPR008218">
    <property type="entry name" value="ATPase_V1-cplx_f_g_su"/>
</dbReference>
<dbReference type="InterPro" id="IPR005772">
    <property type="entry name" value="ATPase_V1-cplx_fsu_euk"/>
</dbReference>
<dbReference type="InterPro" id="IPR036906">
    <property type="entry name" value="ATPase_V1_fsu_sf"/>
</dbReference>
<dbReference type="NCBIfam" id="TIGR01101">
    <property type="entry name" value="V_ATP_synt_F"/>
    <property type="match status" value="1"/>
</dbReference>
<dbReference type="PANTHER" id="PTHR13861:SF2">
    <property type="entry name" value="V-TYPE PROTON ATPASE SUBUNIT F"/>
    <property type="match status" value="1"/>
</dbReference>
<dbReference type="PANTHER" id="PTHR13861">
    <property type="entry name" value="VACUOLAR ATP SYNTHASE SUBUNIT F"/>
    <property type="match status" value="1"/>
</dbReference>
<dbReference type="Pfam" id="PF01990">
    <property type="entry name" value="ATP-synt_F"/>
    <property type="match status" value="1"/>
</dbReference>
<dbReference type="PIRSF" id="PIRSF015945">
    <property type="entry name" value="ATPase_V1_F_euk"/>
    <property type="match status" value="1"/>
</dbReference>
<dbReference type="SUPFAM" id="SSF159468">
    <property type="entry name" value="AtpF-like"/>
    <property type="match status" value="1"/>
</dbReference>
<accession>Q16864</accession>
<accession>C9J2K4</accession>
<accession>Q6IBA8</accession>
<protein>
    <recommendedName>
        <fullName>V-type proton ATPase subunit F</fullName>
        <shortName>V-ATPase subunit F</shortName>
    </recommendedName>
    <alternativeName>
        <fullName>V-ATPase 14 kDa subunit</fullName>
    </alternativeName>
    <alternativeName>
        <fullName>Vacuolar proton pump subunit F</fullName>
    </alternativeName>
</protein>
<keyword id="KW-0002">3D-structure</keyword>
<keyword id="KW-0025">Alternative splicing</keyword>
<keyword id="KW-0968">Cytoplasmic vesicle</keyword>
<keyword id="KW-0375">Hydrogen ion transport</keyword>
<keyword id="KW-0406">Ion transport</keyword>
<keyword id="KW-0472">Membrane</keyword>
<keyword id="KW-1267">Proteomics identification</keyword>
<keyword id="KW-1185">Reference proteome</keyword>
<keyword id="KW-0770">Synapse</keyword>
<keyword id="KW-0813">Transport</keyword>
<evidence type="ECO:0000250" key="1">
    <source>
        <dbReference type="UniProtKB" id="P50408"/>
    </source>
</evidence>
<evidence type="ECO:0000250" key="2">
    <source>
        <dbReference type="UniProtKB" id="Q28029"/>
    </source>
</evidence>
<evidence type="ECO:0000269" key="3">
    <source>
    </source>
</evidence>
<evidence type="ECO:0000303" key="4">
    <source>
    </source>
</evidence>
<evidence type="ECO:0000305" key="5"/>
<evidence type="ECO:0007744" key="6">
    <source>
        <dbReference type="PDB" id="6WLZ"/>
    </source>
</evidence>
<evidence type="ECO:0007744" key="7">
    <source>
        <dbReference type="PDB" id="6WM2"/>
    </source>
</evidence>
<evidence type="ECO:0007744" key="8">
    <source>
        <dbReference type="PDB" id="6WM3"/>
    </source>
</evidence>
<evidence type="ECO:0007744" key="9">
    <source>
        <dbReference type="PDB" id="6WM4"/>
    </source>
</evidence>
<evidence type="ECO:0007829" key="10">
    <source>
        <dbReference type="PDB" id="6WLZ"/>
    </source>
</evidence>
<evidence type="ECO:0007829" key="11">
    <source>
        <dbReference type="PDB" id="6WM2"/>
    </source>
</evidence>
<evidence type="ECO:0007829" key="12">
    <source>
        <dbReference type="PDB" id="6WM3"/>
    </source>
</evidence>
<reference key="1">
    <citation type="journal article" date="1995" name="DNA Res.">
        <title>Cloning, sequencing and expression of a novel cDNA encoding human vacuolar ATPase (14-kDa subunit).</title>
        <authorList>
            <person name="Fujiwara T."/>
            <person name="Kawai A."/>
            <person name="Shimizu F."/>
            <person name="Hirano H."/>
            <person name="Okuno S."/>
            <person name="Takeda S."/>
            <person name="Ozaki K."/>
            <person name="Shimada Y."/>
            <person name="Nagata M."/>
            <person name="Watanabe T."/>
            <person name="Takaichi A."/>
            <person name="Nakamura Y."/>
            <person name="Shin S."/>
        </authorList>
    </citation>
    <scope>NUCLEOTIDE SEQUENCE [MRNA] (ISOFORM 1)</scope>
    <source>
        <tissue>Fetal brain</tissue>
    </source>
</reference>
<reference key="2">
    <citation type="submission" date="2004-06" db="EMBL/GenBank/DDBJ databases">
        <title>Cloning of human full open reading frames in Gateway(TM) system entry vector (pDONR201).</title>
        <authorList>
            <person name="Ebert L."/>
            <person name="Schick M."/>
            <person name="Neubert P."/>
            <person name="Schatten R."/>
            <person name="Henze S."/>
            <person name="Korn B."/>
        </authorList>
    </citation>
    <scope>NUCLEOTIDE SEQUENCE [LARGE SCALE MRNA] (ISOFORM 1)</scope>
</reference>
<reference key="3">
    <citation type="journal article" date="2003" name="Nature">
        <title>The DNA sequence of human chromosome 7.</title>
        <authorList>
            <person name="Hillier L.W."/>
            <person name="Fulton R.S."/>
            <person name="Fulton L.A."/>
            <person name="Graves T.A."/>
            <person name="Pepin K.H."/>
            <person name="Wagner-McPherson C."/>
            <person name="Layman D."/>
            <person name="Maas J."/>
            <person name="Jaeger S."/>
            <person name="Walker R."/>
            <person name="Wylie K."/>
            <person name="Sekhon M."/>
            <person name="Becker M.C."/>
            <person name="O'Laughlin M.D."/>
            <person name="Schaller M.E."/>
            <person name="Fewell G.A."/>
            <person name="Delehaunty K.D."/>
            <person name="Miner T.L."/>
            <person name="Nash W.E."/>
            <person name="Cordes M."/>
            <person name="Du H."/>
            <person name="Sun H."/>
            <person name="Edwards J."/>
            <person name="Bradshaw-Cordum H."/>
            <person name="Ali J."/>
            <person name="Andrews S."/>
            <person name="Isak A."/>
            <person name="Vanbrunt A."/>
            <person name="Nguyen C."/>
            <person name="Du F."/>
            <person name="Lamar B."/>
            <person name="Courtney L."/>
            <person name="Kalicki J."/>
            <person name="Ozersky P."/>
            <person name="Bielicki L."/>
            <person name="Scott K."/>
            <person name="Holmes A."/>
            <person name="Harkins R."/>
            <person name="Harris A."/>
            <person name="Strong C.M."/>
            <person name="Hou S."/>
            <person name="Tomlinson C."/>
            <person name="Dauphin-Kohlberg S."/>
            <person name="Kozlowicz-Reilly A."/>
            <person name="Leonard S."/>
            <person name="Rohlfing T."/>
            <person name="Rock S.M."/>
            <person name="Tin-Wollam A.-M."/>
            <person name="Abbott A."/>
            <person name="Minx P."/>
            <person name="Maupin R."/>
            <person name="Strowmatt C."/>
            <person name="Latreille P."/>
            <person name="Miller N."/>
            <person name="Johnson D."/>
            <person name="Murray J."/>
            <person name="Woessner J.P."/>
            <person name="Wendl M.C."/>
            <person name="Yang S.-P."/>
            <person name="Schultz B.R."/>
            <person name="Wallis J.W."/>
            <person name="Spieth J."/>
            <person name="Bieri T.A."/>
            <person name="Nelson J.O."/>
            <person name="Berkowicz N."/>
            <person name="Wohldmann P.E."/>
            <person name="Cook L.L."/>
            <person name="Hickenbotham M.T."/>
            <person name="Eldred J."/>
            <person name="Williams D."/>
            <person name="Bedell J.A."/>
            <person name="Mardis E.R."/>
            <person name="Clifton S.W."/>
            <person name="Chissoe S.L."/>
            <person name="Marra M.A."/>
            <person name="Raymond C."/>
            <person name="Haugen E."/>
            <person name="Gillett W."/>
            <person name="Zhou Y."/>
            <person name="James R."/>
            <person name="Phelps K."/>
            <person name="Iadanoto S."/>
            <person name="Bubb K."/>
            <person name="Simms E."/>
            <person name="Levy R."/>
            <person name="Clendenning J."/>
            <person name="Kaul R."/>
            <person name="Kent W.J."/>
            <person name="Furey T.S."/>
            <person name="Baertsch R.A."/>
            <person name="Brent M.R."/>
            <person name="Keibler E."/>
            <person name="Flicek P."/>
            <person name="Bork P."/>
            <person name="Suyama M."/>
            <person name="Bailey J.A."/>
            <person name="Portnoy M.E."/>
            <person name="Torrents D."/>
            <person name="Chinwalla A.T."/>
            <person name="Gish W.R."/>
            <person name="Eddy S.R."/>
            <person name="McPherson J.D."/>
            <person name="Olson M.V."/>
            <person name="Eichler E.E."/>
            <person name="Green E.D."/>
            <person name="Waterston R.H."/>
            <person name="Wilson R.K."/>
        </authorList>
    </citation>
    <scope>NUCLEOTIDE SEQUENCE [LARGE SCALE GENOMIC DNA]</scope>
</reference>
<reference key="4">
    <citation type="journal article" date="2004" name="Genome Res.">
        <title>The status, quality, and expansion of the NIH full-length cDNA project: the Mammalian Gene Collection (MGC).</title>
        <authorList>
            <consortium name="The MGC Project Team"/>
        </authorList>
    </citation>
    <scope>NUCLEOTIDE SEQUENCE [LARGE SCALE MRNA] (ISOFORMS 1 AND 2)</scope>
    <source>
        <tissue>Brain</tissue>
        <tissue>Lung adenocarcinoma</tissue>
    </source>
</reference>
<reference key="5">
    <citation type="journal article" date="2011" name="BMC Syst. Biol.">
        <title>Initial characterization of the human central proteome.</title>
        <authorList>
            <person name="Burkard T.R."/>
            <person name="Planyavsky M."/>
            <person name="Kaupe I."/>
            <person name="Breitwieser F.P."/>
            <person name="Buerckstuemmer T."/>
            <person name="Bennett K.L."/>
            <person name="Superti-Furga G."/>
            <person name="Colinge J."/>
        </authorList>
    </citation>
    <scope>IDENTIFICATION BY MASS SPECTROMETRY [LARGE SCALE ANALYSIS]</scope>
</reference>
<reference key="6">
    <citation type="journal article" date="2015" name="Proteomics">
        <title>N-terminome analysis of the human mitochondrial proteome.</title>
        <authorList>
            <person name="Vaca Jacome A.S."/>
            <person name="Rabilloud T."/>
            <person name="Schaeffer-Reiss C."/>
            <person name="Rompais M."/>
            <person name="Ayoub D."/>
            <person name="Lane L."/>
            <person name="Bairoch A."/>
            <person name="Van Dorsselaer A."/>
            <person name="Carapito C."/>
        </authorList>
    </citation>
    <scope>IDENTIFICATION BY MASS SPECTROMETRY [LARGE SCALE ANALYSIS]</scope>
</reference>
<reference evidence="6 7 8 9" key="7">
    <citation type="journal article" date="2020" name="Mol. Cell">
        <title>Structures of a Complete Human V-ATPase Reveal Mechanisms of Its Assembly.</title>
        <authorList>
            <person name="Wang L."/>
            <person name="Wu D."/>
            <person name="Robinson C.V."/>
            <person name="Wu H."/>
            <person name="Fu T.M."/>
        </authorList>
    </citation>
    <scope>STRUCTURE BY ELECTRON MICROSCOPY (2.90 ANGSTROMS)</scope>
    <scope>FUNCTION</scope>
    <scope>IDENTIFICATION IN THE V-ATPASE COMPLEX</scope>
</reference>
<gene>
    <name type="primary">ATP6V1F</name>
    <name type="synonym">ATP6S14</name>
    <name type="synonym">VATF</name>
</gene>
<sequence>MAGRGKLIAVIGDEDTVTGFLLGGIGELNKNRHPNFLVVEKDTTINEIEDTFRQFLNRDDIGIILINQYIAEMVRHALDAHQQSIPAVLEIPSKEHPYDAAKDSILRRARGMFTAEDLR</sequence>
<organism>
    <name type="scientific">Homo sapiens</name>
    <name type="common">Human</name>
    <dbReference type="NCBI Taxonomy" id="9606"/>
    <lineage>
        <taxon>Eukaryota</taxon>
        <taxon>Metazoa</taxon>
        <taxon>Chordata</taxon>
        <taxon>Craniata</taxon>
        <taxon>Vertebrata</taxon>
        <taxon>Euteleostomi</taxon>
        <taxon>Mammalia</taxon>
        <taxon>Eutheria</taxon>
        <taxon>Euarchontoglires</taxon>
        <taxon>Primates</taxon>
        <taxon>Haplorrhini</taxon>
        <taxon>Catarrhini</taxon>
        <taxon>Hominidae</taxon>
        <taxon>Homo</taxon>
    </lineage>
</organism>
<comment type="function">
    <text evidence="2 3">Subunit of the V1 complex of vacuolar(H+)-ATPase (V-ATPase), a multisubunit enzyme composed of a peripheral complex (V1) that hydrolyzes ATP and a membrane integral complex (V0) that translocates protons (PubMed:33065002). V-ATPase is responsible for acidifying and maintaining the pH of intracellular compartments and in some cell types, is targeted to the plasma membrane, where it is responsible for acidifying the extracellular environment (By similarity).</text>
</comment>
<comment type="subunit">
    <text evidence="3">V-ATPase is a heteromultimeric enzyme made up of two complexes: the ATP-hydrolytic V1 complex and the proton translocation V0 complex (PubMed:33065002). The V1 complex consists of three catalytic AB heterodimers that form a heterohexamer, three peripheral stalks each consisting of EG heterodimers, one central rotor including subunits D and F, and the regulatory subunits C and H (PubMed:33065002). The proton translocation complex V0 consists of the proton transport subunit a, a ring of proteolipid subunits c9c'', rotary subunit d, subunits e and f, and the accessory subunits ATP6AP1/Ac45 and ATP6AP2/PRR (PubMed:33065002).</text>
</comment>
<comment type="interaction">
    <interactant intactId="EBI-714690">
        <id>Q16864</id>
    </interactant>
    <interactant intactId="EBI-2684998">
        <id>Q9Y5K8</id>
        <label>ATP6V1D</label>
    </interactant>
    <organismsDiffer>false</organismsDiffer>
    <experiments>7</experiments>
</comment>
<comment type="subcellular location">
    <subcellularLocation>
        <location evidence="1">Cytoplasmic vesicle</location>
        <location evidence="1">Secretory vesicle</location>
        <location evidence="1">Synaptic vesicle membrane</location>
        <topology evidence="5">Peripheral membrane protein</topology>
    </subcellularLocation>
    <subcellularLocation>
        <location evidence="1">Cytoplasmic vesicle</location>
        <location evidence="1">Clathrin-coated vesicle membrane</location>
        <topology evidence="5">Peripheral membrane protein</topology>
    </subcellularLocation>
</comment>
<comment type="alternative products">
    <event type="alternative splicing"/>
    <isoform>
        <id>Q16864-1</id>
        <name>1</name>
        <sequence type="displayed"/>
    </isoform>
    <isoform>
        <id>Q16864-2</id>
        <name>2</name>
        <sequence type="described" ref="VSP_045952"/>
    </isoform>
</comment>
<comment type="similarity">
    <text evidence="5">Belongs to the V-ATPase F subunit family.</text>
</comment>
<proteinExistence type="evidence at protein level"/>
<name>VATF_HUMAN</name>
<feature type="chain" id="PRO_0000144799" description="V-type proton ATPase subunit F">
    <location>
        <begin position="1"/>
        <end position="119"/>
    </location>
</feature>
<feature type="splice variant" id="VSP_045952" description="In isoform 2." evidence="4">
    <original>F</original>
    <variation>FRSLGSLPGSVVEANPNQRDPPLWDEIDS</variation>
    <location>
        <position position="52"/>
    </location>
</feature>
<feature type="sequence variant" id="VAR_048348" description="In dbSNP:rs10958.">
    <original>G</original>
    <variation>V</variation>
    <location>
        <position position="24"/>
    </location>
</feature>
<feature type="sequence conflict" description="In Ref. 1; BAA08392." evidence="5" ref="1">
    <original>I</original>
    <variation>T</variation>
    <location>
        <position position="8"/>
    </location>
</feature>
<feature type="strand" evidence="10">
    <location>
        <begin position="6"/>
        <end position="12"/>
    </location>
</feature>
<feature type="helix" evidence="10">
    <location>
        <begin position="14"/>
        <end position="23"/>
    </location>
</feature>
<feature type="strand" evidence="11">
    <location>
        <begin position="34"/>
        <end position="36"/>
    </location>
</feature>
<feature type="helix" evidence="10">
    <location>
        <begin position="45"/>
        <end position="57"/>
    </location>
</feature>
<feature type="strand" evidence="10">
    <location>
        <begin position="61"/>
        <end position="67"/>
    </location>
</feature>
<feature type="helix" evidence="10">
    <location>
        <begin position="68"/>
        <end position="71"/>
    </location>
</feature>
<feature type="helix" evidence="10">
    <location>
        <begin position="75"/>
        <end position="79"/>
    </location>
</feature>
<feature type="strand" evidence="10">
    <location>
        <begin position="84"/>
        <end position="91"/>
    </location>
</feature>
<feature type="strand" evidence="10">
    <location>
        <begin position="94"/>
        <end position="96"/>
    </location>
</feature>
<feature type="strand" evidence="10">
    <location>
        <begin position="100"/>
        <end position="102"/>
    </location>
</feature>
<feature type="strand" evidence="10">
    <location>
        <begin position="104"/>
        <end position="106"/>
    </location>
</feature>
<feature type="turn" evidence="12">
    <location>
        <begin position="108"/>
        <end position="111"/>
    </location>
</feature>